<dbReference type="EC" id="7.1.2.2" evidence="1"/>
<dbReference type="EMBL" id="CP000383">
    <property type="protein sequence ID" value="ABG57626.1"/>
    <property type="molecule type" value="Genomic_DNA"/>
</dbReference>
<dbReference type="RefSeq" id="WP_011583742.1">
    <property type="nucleotide sequence ID" value="NC_008255.1"/>
</dbReference>
<dbReference type="SMR" id="Q11Y90"/>
<dbReference type="STRING" id="269798.CHU_0336"/>
<dbReference type="KEGG" id="chu:CHU_0336"/>
<dbReference type="eggNOG" id="COG0055">
    <property type="taxonomic scope" value="Bacteria"/>
</dbReference>
<dbReference type="HOGENOM" id="CLU_022398_0_2_10"/>
<dbReference type="OrthoDB" id="9801639at2"/>
<dbReference type="Proteomes" id="UP000001822">
    <property type="component" value="Chromosome"/>
</dbReference>
<dbReference type="GO" id="GO:0005886">
    <property type="term" value="C:plasma membrane"/>
    <property type="evidence" value="ECO:0007669"/>
    <property type="project" value="UniProtKB-SubCell"/>
</dbReference>
<dbReference type="GO" id="GO:0045259">
    <property type="term" value="C:proton-transporting ATP synthase complex"/>
    <property type="evidence" value="ECO:0007669"/>
    <property type="project" value="UniProtKB-KW"/>
</dbReference>
<dbReference type="GO" id="GO:0005524">
    <property type="term" value="F:ATP binding"/>
    <property type="evidence" value="ECO:0007669"/>
    <property type="project" value="UniProtKB-UniRule"/>
</dbReference>
<dbReference type="GO" id="GO:0016887">
    <property type="term" value="F:ATP hydrolysis activity"/>
    <property type="evidence" value="ECO:0007669"/>
    <property type="project" value="InterPro"/>
</dbReference>
<dbReference type="GO" id="GO:0046933">
    <property type="term" value="F:proton-transporting ATP synthase activity, rotational mechanism"/>
    <property type="evidence" value="ECO:0007669"/>
    <property type="project" value="UniProtKB-UniRule"/>
</dbReference>
<dbReference type="CDD" id="cd18110">
    <property type="entry name" value="ATP-synt_F1_beta_C"/>
    <property type="match status" value="1"/>
</dbReference>
<dbReference type="CDD" id="cd18115">
    <property type="entry name" value="ATP-synt_F1_beta_N"/>
    <property type="match status" value="1"/>
</dbReference>
<dbReference type="CDD" id="cd01133">
    <property type="entry name" value="F1-ATPase_beta_CD"/>
    <property type="match status" value="1"/>
</dbReference>
<dbReference type="FunFam" id="1.10.1140.10:FF:000001">
    <property type="entry name" value="ATP synthase subunit beta"/>
    <property type="match status" value="1"/>
</dbReference>
<dbReference type="FunFam" id="3.40.50.300:FF:000004">
    <property type="entry name" value="ATP synthase subunit beta"/>
    <property type="match status" value="1"/>
</dbReference>
<dbReference type="Gene3D" id="2.40.10.170">
    <property type="match status" value="1"/>
</dbReference>
<dbReference type="Gene3D" id="1.10.1140.10">
    <property type="entry name" value="Bovine Mitochondrial F1-atpase, Atp Synthase Beta Chain, Chain D, domain 3"/>
    <property type="match status" value="1"/>
</dbReference>
<dbReference type="Gene3D" id="3.40.50.300">
    <property type="entry name" value="P-loop containing nucleotide triphosphate hydrolases"/>
    <property type="match status" value="1"/>
</dbReference>
<dbReference type="HAMAP" id="MF_01347">
    <property type="entry name" value="ATP_synth_beta_bact"/>
    <property type="match status" value="1"/>
</dbReference>
<dbReference type="InterPro" id="IPR003593">
    <property type="entry name" value="AAA+_ATPase"/>
</dbReference>
<dbReference type="InterPro" id="IPR055190">
    <property type="entry name" value="ATP-synt_VA_C"/>
</dbReference>
<dbReference type="InterPro" id="IPR005722">
    <property type="entry name" value="ATP_synth_F1_bsu"/>
</dbReference>
<dbReference type="InterPro" id="IPR020003">
    <property type="entry name" value="ATPase_a/bsu_AS"/>
</dbReference>
<dbReference type="InterPro" id="IPR050053">
    <property type="entry name" value="ATPase_alpha/beta_chains"/>
</dbReference>
<dbReference type="InterPro" id="IPR004100">
    <property type="entry name" value="ATPase_F1/V1/A1_a/bsu_N"/>
</dbReference>
<dbReference type="InterPro" id="IPR036121">
    <property type="entry name" value="ATPase_F1/V1/A1_a/bsu_N_sf"/>
</dbReference>
<dbReference type="InterPro" id="IPR000194">
    <property type="entry name" value="ATPase_F1/V1/A1_a/bsu_nucl-bd"/>
</dbReference>
<dbReference type="InterPro" id="IPR024034">
    <property type="entry name" value="ATPase_F1/V1_b/a_C"/>
</dbReference>
<dbReference type="InterPro" id="IPR027417">
    <property type="entry name" value="P-loop_NTPase"/>
</dbReference>
<dbReference type="NCBIfam" id="TIGR01039">
    <property type="entry name" value="atpD"/>
    <property type="match status" value="1"/>
</dbReference>
<dbReference type="PANTHER" id="PTHR15184">
    <property type="entry name" value="ATP SYNTHASE"/>
    <property type="match status" value="1"/>
</dbReference>
<dbReference type="PANTHER" id="PTHR15184:SF71">
    <property type="entry name" value="ATP SYNTHASE SUBUNIT BETA, MITOCHONDRIAL"/>
    <property type="match status" value="1"/>
</dbReference>
<dbReference type="Pfam" id="PF00006">
    <property type="entry name" value="ATP-synt_ab"/>
    <property type="match status" value="1"/>
</dbReference>
<dbReference type="Pfam" id="PF02874">
    <property type="entry name" value="ATP-synt_ab_N"/>
    <property type="match status" value="1"/>
</dbReference>
<dbReference type="Pfam" id="PF22919">
    <property type="entry name" value="ATP-synt_VA_C"/>
    <property type="match status" value="1"/>
</dbReference>
<dbReference type="SMART" id="SM00382">
    <property type="entry name" value="AAA"/>
    <property type="match status" value="1"/>
</dbReference>
<dbReference type="SUPFAM" id="SSF47917">
    <property type="entry name" value="C-terminal domain of alpha and beta subunits of F1 ATP synthase"/>
    <property type="match status" value="1"/>
</dbReference>
<dbReference type="SUPFAM" id="SSF50615">
    <property type="entry name" value="N-terminal domain of alpha and beta subunits of F1 ATP synthase"/>
    <property type="match status" value="1"/>
</dbReference>
<dbReference type="SUPFAM" id="SSF52540">
    <property type="entry name" value="P-loop containing nucleoside triphosphate hydrolases"/>
    <property type="match status" value="1"/>
</dbReference>
<dbReference type="PROSITE" id="PS00152">
    <property type="entry name" value="ATPASE_ALPHA_BETA"/>
    <property type="match status" value="1"/>
</dbReference>
<gene>
    <name evidence="1" type="primary">atpD</name>
    <name type="ordered locus">CHU_0336</name>
</gene>
<name>ATPB_CYTH3</name>
<evidence type="ECO:0000255" key="1">
    <source>
        <dbReference type="HAMAP-Rule" id="MF_01347"/>
    </source>
</evidence>
<reference key="1">
    <citation type="journal article" date="2007" name="Appl. Environ. Microbiol.">
        <title>Genome sequence of the cellulolytic gliding bacterium Cytophaga hutchinsonii.</title>
        <authorList>
            <person name="Xie G."/>
            <person name="Bruce D.C."/>
            <person name="Challacombe J.F."/>
            <person name="Chertkov O."/>
            <person name="Detter J.C."/>
            <person name="Gilna P."/>
            <person name="Han C.S."/>
            <person name="Lucas S."/>
            <person name="Misra M."/>
            <person name="Myers G.L."/>
            <person name="Richardson P."/>
            <person name="Tapia R."/>
            <person name="Thayer N."/>
            <person name="Thompson L.S."/>
            <person name="Brettin T.S."/>
            <person name="Henrissat B."/>
            <person name="Wilson D.B."/>
            <person name="McBride M.J."/>
        </authorList>
    </citation>
    <scope>NUCLEOTIDE SEQUENCE [LARGE SCALE GENOMIC DNA]</scope>
    <source>
        <strain>ATCC 33406 / DSM 1761 / JCM 20678 / CIP 103989 / IAM 12607 / NBRC 15051 / NCIMB 9469 / D465</strain>
    </source>
</reference>
<sequence length="501" mass="54645">MANIGKITQIIGPVVDVGFEGEYALPQILDALEVTRPDGQKVILECQQHLGEDRVRTIAMDSTDGLTRGMEVKTYGMPISMPVGEDIRGRLYNVVGDAIDGIPSGVAANRMSIHRQAPKFEDLSTNTEVLFTGIKVIDLLEPYVKGGKIGLFGGAGVGKTVLIMELINNIAKAYAGLSVFAGVGERTREGNDLLREMIESNVIRYGDEFKHSMEKGEWDLSKVDATELLKSQATLVFGQMNEPPGARARVALAGLTVAEYFRDGDGQGQGRDILFFIDNIFRFTQAGSEVSALLGRMPSAVGYQPTLATEMGAMQERITSTKRGSITSVQAVYVPADDLTDPAPATTFAHLDATTVLNRKISELGIYPAVDPLDSTSRILSPEILGSEHYDCAQRVKEILQRYKELQDIIAILGMDELSEEDKQAVHRARRVQRFLSQPFHVAEQFTGLKGELVNIKDTIKGFNMIMDGALDHLPEAAFNLVGSIEQAIAKGEKLVADSKK</sequence>
<organism>
    <name type="scientific">Cytophaga hutchinsonii (strain ATCC 33406 / DSM 1761 / CIP 103989 / NBRC 15051 / NCIMB 9469 / D465)</name>
    <dbReference type="NCBI Taxonomy" id="269798"/>
    <lineage>
        <taxon>Bacteria</taxon>
        <taxon>Pseudomonadati</taxon>
        <taxon>Bacteroidota</taxon>
        <taxon>Cytophagia</taxon>
        <taxon>Cytophagales</taxon>
        <taxon>Cytophagaceae</taxon>
        <taxon>Cytophaga</taxon>
    </lineage>
</organism>
<feature type="chain" id="PRO_0000339524" description="ATP synthase subunit beta">
    <location>
        <begin position="1"/>
        <end position="501"/>
    </location>
</feature>
<feature type="binding site" evidence="1">
    <location>
        <begin position="153"/>
        <end position="160"/>
    </location>
    <ligand>
        <name>ATP</name>
        <dbReference type="ChEBI" id="CHEBI:30616"/>
    </ligand>
</feature>
<protein>
    <recommendedName>
        <fullName evidence="1">ATP synthase subunit beta</fullName>
        <ecNumber evidence="1">7.1.2.2</ecNumber>
    </recommendedName>
    <alternativeName>
        <fullName evidence="1">ATP synthase F1 sector subunit beta</fullName>
    </alternativeName>
    <alternativeName>
        <fullName evidence="1">F-ATPase subunit beta</fullName>
    </alternativeName>
</protein>
<accession>Q11Y90</accession>
<comment type="function">
    <text evidence="1">Produces ATP from ADP in the presence of a proton gradient across the membrane. The catalytic sites are hosted primarily by the beta subunits.</text>
</comment>
<comment type="catalytic activity">
    <reaction evidence="1">
        <text>ATP + H2O + 4 H(+)(in) = ADP + phosphate + 5 H(+)(out)</text>
        <dbReference type="Rhea" id="RHEA:57720"/>
        <dbReference type="ChEBI" id="CHEBI:15377"/>
        <dbReference type="ChEBI" id="CHEBI:15378"/>
        <dbReference type="ChEBI" id="CHEBI:30616"/>
        <dbReference type="ChEBI" id="CHEBI:43474"/>
        <dbReference type="ChEBI" id="CHEBI:456216"/>
        <dbReference type="EC" id="7.1.2.2"/>
    </reaction>
</comment>
<comment type="subunit">
    <text evidence="1">F-type ATPases have 2 components, CF(1) - the catalytic core - and CF(0) - the membrane proton channel. CF(1) has five subunits: alpha(3), beta(3), gamma(1), delta(1), epsilon(1). CF(0) has three main subunits: a(1), b(2) and c(9-12). The alpha and beta chains form an alternating ring which encloses part of the gamma chain. CF(1) is attached to CF(0) by a central stalk formed by the gamma and epsilon chains, while a peripheral stalk is formed by the delta and b chains.</text>
</comment>
<comment type="subcellular location">
    <subcellularLocation>
        <location evidence="1">Cell inner membrane</location>
        <topology evidence="1">Peripheral membrane protein</topology>
    </subcellularLocation>
</comment>
<comment type="similarity">
    <text evidence="1">Belongs to the ATPase alpha/beta chains family.</text>
</comment>
<proteinExistence type="inferred from homology"/>
<keyword id="KW-0066">ATP synthesis</keyword>
<keyword id="KW-0067">ATP-binding</keyword>
<keyword id="KW-0997">Cell inner membrane</keyword>
<keyword id="KW-1003">Cell membrane</keyword>
<keyword id="KW-0139">CF(1)</keyword>
<keyword id="KW-0375">Hydrogen ion transport</keyword>
<keyword id="KW-0406">Ion transport</keyword>
<keyword id="KW-0472">Membrane</keyword>
<keyword id="KW-0547">Nucleotide-binding</keyword>
<keyword id="KW-1185">Reference proteome</keyword>
<keyword id="KW-1278">Translocase</keyword>
<keyword id="KW-0813">Transport</keyword>